<proteinExistence type="inferred from homology"/>
<keyword id="KW-0687">Ribonucleoprotein</keyword>
<keyword id="KW-0689">Ribosomal protein</keyword>
<dbReference type="EMBL" id="CP000425">
    <property type="protein sequence ID" value="ABJ72716.1"/>
    <property type="molecule type" value="Genomic_DNA"/>
</dbReference>
<dbReference type="RefSeq" id="WP_003130646.1">
    <property type="nucleotide sequence ID" value="NC_008527.1"/>
</dbReference>
<dbReference type="SMR" id="Q02ZA6"/>
<dbReference type="GeneID" id="89633205"/>
<dbReference type="KEGG" id="llc:LACR_1182"/>
<dbReference type="HOGENOM" id="CLU_095424_4_0_9"/>
<dbReference type="Proteomes" id="UP000000240">
    <property type="component" value="Chromosome"/>
</dbReference>
<dbReference type="GO" id="GO:0022625">
    <property type="term" value="C:cytosolic large ribosomal subunit"/>
    <property type="evidence" value="ECO:0007669"/>
    <property type="project" value="TreeGrafter"/>
</dbReference>
<dbReference type="GO" id="GO:0003735">
    <property type="term" value="F:structural constituent of ribosome"/>
    <property type="evidence" value="ECO:0007669"/>
    <property type="project" value="InterPro"/>
</dbReference>
<dbReference type="GO" id="GO:0006412">
    <property type="term" value="P:translation"/>
    <property type="evidence" value="ECO:0007669"/>
    <property type="project" value="UniProtKB-UniRule"/>
</dbReference>
<dbReference type="FunFam" id="2.40.50.100:FF:000004">
    <property type="entry name" value="50S ribosomal protein L27"/>
    <property type="match status" value="1"/>
</dbReference>
<dbReference type="Gene3D" id="2.40.50.100">
    <property type="match status" value="1"/>
</dbReference>
<dbReference type="HAMAP" id="MF_00539">
    <property type="entry name" value="Ribosomal_bL27"/>
    <property type="match status" value="1"/>
</dbReference>
<dbReference type="InterPro" id="IPR001684">
    <property type="entry name" value="Ribosomal_bL27"/>
</dbReference>
<dbReference type="InterPro" id="IPR018261">
    <property type="entry name" value="Ribosomal_bL27_CS"/>
</dbReference>
<dbReference type="NCBIfam" id="TIGR00062">
    <property type="entry name" value="L27"/>
    <property type="match status" value="1"/>
</dbReference>
<dbReference type="PANTHER" id="PTHR15893:SF0">
    <property type="entry name" value="LARGE RIBOSOMAL SUBUNIT PROTEIN BL27M"/>
    <property type="match status" value="1"/>
</dbReference>
<dbReference type="PANTHER" id="PTHR15893">
    <property type="entry name" value="RIBOSOMAL PROTEIN L27"/>
    <property type="match status" value="1"/>
</dbReference>
<dbReference type="Pfam" id="PF01016">
    <property type="entry name" value="Ribosomal_L27"/>
    <property type="match status" value="1"/>
</dbReference>
<dbReference type="PRINTS" id="PR00063">
    <property type="entry name" value="RIBOSOMALL27"/>
</dbReference>
<dbReference type="SUPFAM" id="SSF110324">
    <property type="entry name" value="Ribosomal L27 protein-like"/>
    <property type="match status" value="1"/>
</dbReference>
<dbReference type="PROSITE" id="PS00831">
    <property type="entry name" value="RIBOSOMAL_L27"/>
    <property type="match status" value="1"/>
</dbReference>
<reference key="1">
    <citation type="journal article" date="2006" name="Proc. Natl. Acad. Sci. U.S.A.">
        <title>Comparative genomics of the lactic acid bacteria.</title>
        <authorList>
            <person name="Makarova K.S."/>
            <person name="Slesarev A."/>
            <person name="Wolf Y.I."/>
            <person name="Sorokin A."/>
            <person name="Mirkin B."/>
            <person name="Koonin E.V."/>
            <person name="Pavlov A."/>
            <person name="Pavlova N."/>
            <person name="Karamychev V."/>
            <person name="Polouchine N."/>
            <person name="Shakhova V."/>
            <person name="Grigoriev I."/>
            <person name="Lou Y."/>
            <person name="Rohksar D."/>
            <person name="Lucas S."/>
            <person name="Huang K."/>
            <person name="Goodstein D.M."/>
            <person name="Hawkins T."/>
            <person name="Plengvidhya V."/>
            <person name="Welker D."/>
            <person name="Hughes J."/>
            <person name="Goh Y."/>
            <person name="Benson A."/>
            <person name="Baldwin K."/>
            <person name="Lee J.-H."/>
            <person name="Diaz-Muniz I."/>
            <person name="Dosti B."/>
            <person name="Smeianov V."/>
            <person name="Wechter W."/>
            <person name="Barabote R."/>
            <person name="Lorca G."/>
            <person name="Altermann E."/>
            <person name="Barrangou R."/>
            <person name="Ganesan B."/>
            <person name="Xie Y."/>
            <person name="Rawsthorne H."/>
            <person name="Tamir D."/>
            <person name="Parker C."/>
            <person name="Breidt F."/>
            <person name="Broadbent J.R."/>
            <person name="Hutkins R."/>
            <person name="O'Sullivan D."/>
            <person name="Steele J."/>
            <person name="Unlu G."/>
            <person name="Saier M.H. Jr."/>
            <person name="Klaenhammer T."/>
            <person name="Richardson P."/>
            <person name="Kozyavkin S."/>
            <person name="Weimer B.C."/>
            <person name="Mills D.A."/>
        </authorList>
    </citation>
    <scope>NUCLEOTIDE SEQUENCE [LARGE SCALE GENOMIC DNA]</scope>
    <source>
        <strain>SK11</strain>
    </source>
</reference>
<name>RL27_LACLS</name>
<accession>Q02ZA6</accession>
<sequence length="94" mass="10033">MLELNLQLFAHKKGGGSTSNGRDSQAKRLGAKASDGELVSGGSILFRQRGTHIHPGTNVGRGGDDTLFAKIEGTVKFEMKRGKKHVSVYPVVAK</sequence>
<comment type="PTM">
    <text evidence="1">The N-terminus is cleaved by ribosomal processing cysteine protease Prp.</text>
</comment>
<comment type="similarity">
    <text evidence="2">Belongs to the bacterial ribosomal protein bL27 family.</text>
</comment>
<feature type="propeptide" id="PRO_0000459906" evidence="1">
    <location>
        <begin position="1"/>
        <end position="9"/>
    </location>
</feature>
<feature type="chain" id="PRO_1000017504" description="Large ribosomal subunit protein bL27">
    <location>
        <begin position="10"/>
        <end position="94"/>
    </location>
</feature>
<feature type="region of interest" description="Disordered" evidence="3">
    <location>
        <begin position="12"/>
        <end position="33"/>
    </location>
</feature>
<protein>
    <recommendedName>
        <fullName evidence="2">Large ribosomal subunit protein bL27</fullName>
    </recommendedName>
    <alternativeName>
        <fullName evidence="4">50S ribosomal protein L27</fullName>
    </alternativeName>
</protein>
<evidence type="ECO:0000250" key="1">
    <source>
        <dbReference type="UniProtKB" id="Q2FXT0"/>
    </source>
</evidence>
<evidence type="ECO:0000255" key="2">
    <source>
        <dbReference type="HAMAP-Rule" id="MF_00539"/>
    </source>
</evidence>
<evidence type="ECO:0000256" key="3">
    <source>
        <dbReference type="SAM" id="MobiDB-lite"/>
    </source>
</evidence>
<evidence type="ECO:0000305" key="4"/>
<organism>
    <name type="scientific">Lactococcus lactis subsp. cremoris (strain SK11)</name>
    <dbReference type="NCBI Taxonomy" id="272622"/>
    <lineage>
        <taxon>Bacteria</taxon>
        <taxon>Bacillati</taxon>
        <taxon>Bacillota</taxon>
        <taxon>Bacilli</taxon>
        <taxon>Lactobacillales</taxon>
        <taxon>Streptococcaceae</taxon>
        <taxon>Lactococcus</taxon>
        <taxon>Lactococcus cremoris subsp. cremoris</taxon>
    </lineage>
</organism>
<gene>
    <name evidence="2" type="primary">rpmA</name>
    <name type="ordered locus">LACR_1182</name>
</gene>